<keyword id="KW-0963">Cytoplasm</keyword>
<keyword id="KW-0489">Methyltransferase</keyword>
<keyword id="KW-0949">S-adenosyl-L-methionine</keyword>
<keyword id="KW-0808">Transferase</keyword>
<protein>
    <recommendedName>
        <fullName evidence="1">Thiopurine S-methyltransferase</fullName>
        <ecNumber evidence="1">2.1.1.67</ecNumber>
    </recommendedName>
    <alternativeName>
        <fullName evidence="1">Thiopurine methyltransferase</fullName>
    </alternativeName>
</protein>
<sequence length="218" mass="24814">MEPGFWHEKWHQQQIGFHQQDINPFLVKYWQQLGLPADTQVFVPLCGKSLDMCFLAEQGHQVIGCELNELAVQHFFSDNQLEMTQTTVGEHQHYHTEQISLYQGDIFTLPKTITQAVTAFYDRAALIAWPESMRAQYAKQLASLLPSGSVGLLVTLDYPQEALSGPPFAVSPTWVEQHLSDDFDIEVLASQDVLADNPRFIKKAVPWLNEAAYLLKRK</sequence>
<gene>
    <name evidence="1" type="primary">tpm</name>
    <name type="ordered locus">Shew185_3784</name>
</gene>
<dbReference type="EC" id="2.1.1.67" evidence="1"/>
<dbReference type="EMBL" id="CP000753">
    <property type="protein sequence ID" value="ABS09908.1"/>
    <property type="molecule type" value="Genomic_DNA"/>
</dbReference>
<dbReference type="RefSeq" id="WP_012090264.1">
    <property type="nucleotide sequence ID" value="NC_009665.1"/>
</dbReference>
<dbReference type="SMR" id="A6WSW9"/>
<dbReference type="KEGG" id="sbm:Shew185_3784"/>
<dbReference type="HOGENOM" id="CLU_085515_1_0_6"/>
<dbReference type="GO" id="GO:0005737">
    <property type="term" value="C:cytoplasm"/>
    <property type="evidence" value="ECO:0007669"/>
    <property type="project" value="UniProtKB-SubCell"/>
</dbReference>
<dbReference type="GO" id="GO:0008119">
    <property type="term" value="F:thiopurine S-methyltransferase activity"/>
    <property type="evidence" value="ECO:0007669"/>
    <property type="project" value="UniProtKB-UniRule"/>
</dbReference>
<dbReference type="GO" id="GO:0032259">
    <property type="term" value="P:methylation"/>
    <property type="evidence" value="ECO:0007669"/>
    <property type="project" value="UniProtKB-KW"/>
</dbReference>
<dbReference type="GO" id="GO:0010038">
    <property type="term" value="P:response to metal ion"/>
    <property type="evidence" value="ECO:0007669"/>
    <property type="project" value="InterPro"/>
</dbReference>
<dbReference type="FunFam" id="3.40.50.150:FF:000101">
    <property type="entry name" value="Thiopurine S-methyltransferase"/>
    <property type="match status" value="1"/>
</dbReference>
<dbReference type="Gene3D" id="3.40.50.150">
    <property type="entry name" value="Vaccinia Virus protein VP39"/>
    <property type="match status" value="1"/>
</dbReference>
<dbReference type="HAMAP" id="MF_00812">
    <property type="entry name" value="Thiopur_methtran"/>
    <property type="match status" value="1"/>
</dbReference>
<dbReference type="InterPro" id="IPR029063">
    <property type="entry name" value="SAM-dependent_MTases_sf"/>
</dbReference>
<dbReference type="InterPro" id="IPR022474">
    <property type="entry name" value="Thiopur_S-MeTfrase_Se/Te_detox"/>
</dbReference>
<dbReference type="InterPro" id="IPR025835">
    <property type="entry name" value="Thiopurine_S-MeTrfase"/>
</dbReference>
<dbReference type="InterPro" id="IPR008854">
    <property type="entry name" value="TPMT"/>
</dbReference>
<dbReference type="NCBIfam" id="NF009732">
    <property type="entry name" value="PRK13255.1"/>
    <property type="match status" value="1"/>
</dbReference>
<dbReference type="NCBIfam" id="TIGR03840">
    <property type="entry name" value="TMPT_Se_Te"/>
    <property type="match status" value="1"/>
</dbReference>
<dbReference type="PANTHER" id="PTHR10259">
    <property type="entry name" value="THIOPURINE S-METHYLTRANSFERASE"/>
    <property type="match status" value="1"/>
</dbReference>
<dbReference type="PANTHER" id="PTHR10259:SF11">
    <property type="entry name" value="THIOPURINE S-METHYLTRANSFERASE"/>
    <property type="match status" value="1"/>
</dbReference>
<dbReference type="Pfam" id="PF05724">
    <property type="entry name" value="TPMT"/>
    <property type="match status" value="1"/>
</dbReference>
<dbReference type="PIRSF" id="PIRSF023956">
    <property type="entry name" value="Thiopurine_S-methyltransferase"/>
    <property type="match status" value="1"/>
</dbReference>
<dbReference type="SUPFAM" id="SSF53335">
    <property type="entry name" value="S-adenosyl-L-methionine-dependent methyltransferases"/>
    <property type="match status" value="1"/>
</dbReference>
<dbReference type="PROSITE" id="PS51585">
    <property type="entry name" value="SAM_MT_TPMT"/>
    <property type="match status" value="1"/>
</dbReference>
<organism>
    <name type="scientific">Shewanella baltica (strain OS185)</name>
    <dbReference type="NCBI Taxonomy" id="402882"/>
    <lineage>
        <taxon>Bacteria</taxon>
        <taxon>Pseudomonadati</taxon>
        <taxon>Pseudomonadota</taxon>
        <taxon>Gammaproteobacteria</taxon>
        <taxon>Alteromonadales</taxon>
        <taxon>Shewanellaceae</taxon>
        <taxon>Shewanella</taxon>
    </lineage>
</organism>
<accession>A6WSW9</accession>
<reference key="1">
    <citation type="submission" date="2007-07" db="EMBL/GenBank/DDBJ databases">
        <title>Complete sequence of chromosome of Shewanella baltica OS185.</title>
        <authorList>
            <consortium name="US DOE Joint Genome Institute"/>
            <person name="Copeland A."/>
            <person name="Lucas S."/>
            <person name="Lapidus A."/>
            <person name="Barry K."/>
            <person name="Glavina del Rio T."/>
            <person name="Dalin E."/>
            <person name="Tice H."/>
            <person name="Pitluck S."/>
            <person name="Sims D."/>
            <person name="Brettin T."/>
            <person name="Bruce D."/>
            <person name="Detter J.C."/>
            <person name="Han C."/>
            <person name="Schmutz J."/>
            <person name="Larimer F."/>
            <person name="Land M."/>
            <person name="Hauser L."/>
            <person name="Kyrpides N."/>
            <person name="Mikhailova N."/>
            <person name="Brettar I."/>
            <person name="Rodrigues J."/>
            <person name="Konstantinidis K."/>
            <person name="Tiedje J."/>
            <person name="Richardson P."/>
        </authorList>
    </citation>
    <scope>NUCLEOTIDE SEQUENCE [LARGE SCALE GENOMIC DNA]</scope>
    <source>
        <strain>OS185</strain>
    </source>
</reference>
<feature type="chain" id="PRO_1000047218" description="Thiopurine S-methyltransferase">
    <location>
        <begin position="1"/>
        <end position="218"/>
    </location>
</feature>
<feature type="binding site" evidence="1">
    <location>
        <position position="10"/>
    </location>
    <ligand>
        <name>S-adenosyl-L-methionine</name>
        <dbReference type="ChEBI" id="CHEBI:59789"/>
    </ligand>
</feature>
<feature type="binding site" evidence="1">
    <location>
        <position position="45"/>
    </location>
    <ligand>
        <name>S-adenosyl-L-methionine</name>
        <dbReference type="ChEBI" id="CHEBI:59789"/>
    </ligand>
</feature>
<feature type="binding site" evidence="1">
    <location>
        <position position="66"/>
    </location>
    <ligand>
        <name>S-adenosyl-L-methionine</name>
        <dbReference type="ChEBI" id="CHEBI:59789"/>
    </ligand>
</feature>
<feature type="binding site" evidence="1">
    <location>
        <position position="123"/>
    </location>
    <ligand>
        <name>S-adenosyl-L-methionine</name>
        <dbReference type="ChEBI" id="CHEBI:59789"/>
    </ligand>
</feature>
<comment type="catalytic activity">
    <reaction evidence="1">
        <text>S-adenosyl-L-methionine + a thiopurine = S-adenosyl-L-homocysteine + a thiopurine S-methylether.</text>
        <dbReference type="EC" id="2.1.1.67"/>
    </reaction>
</comment>
<comment type="subcellular location">
    <subcellularLocation>
        <location evidence="1">Cytoplasm</location>
    </subcellularLocation>
</comment>
<comment type="similarity">
    <text evidence="1">Belongs to the class I-like SAM-binding methyltransferase superfamily. TPMT family.</text>
</comment>
<evidence type="ECO:0000255" key="1">
    <source>
        <dbReference type="HAMAP-Rule" id="MF_00812"/>
    </source>
</evidence>
<proteinExistence type="inferred from homology"/>
<name>TPMT_SHEB8</name>